<dbReference type="EC" id="2.7.11.1"/>
<dbReference type="EMBL" id="AP003747">
    <property type="protein sequence ID" value="BAC82962.1"/>
    <property type="status" value="ALT_INIT"/>
    <property type="molecule type" value="Genomic_DNA"/>
</dbReference>
<dbReference type="EMBL" id="AP008213">
    <property type="protein sequence ID" value="BAF22032.1"/>
    <property type="molecule type" value="Genomic_DNA"/>
</dbReference>
<dbReference type="EMBL" id="AP014963">
    <property type="protein sequence ID" value="BAT02366.1"/>
    <property type="molecule type" value="Genomic_DNA"/>
</dbReference>
<dbReference type="EMBL" id="CM000144">
    <property type="protein sequence ID" value="EAZ40451.1"/>
    <property type="status" value="ALT_INIT"/>
    <property type="molecule type" value="Genomic_DNA"/>
</dbReference>
<dbReference type="EMBL" id="AK072014">
    <property type="protein sequence ID" value="BAG92785.1"/>
    <property type="molecule type" value="mRNA"/>
</dbReference>
<dbReference type="EMBL" id="AK072176">
    <property type="protein sequence ID" value="BAG92856.1"/>
    <property type="molecule type" value="mRNA"/>
</dbReference>
<dbReference type="EMBL" id="AK105268">
    <property type="protein sequence ID" value="BAG97170.1"/>
    <property type="molecule type" value="mRNA"/>
</dbReference>
<dbReference type="RefSeq" id="XP_015644746.1">
    <property type="nucleotide sequence ID" value="XM_015789260.1"/>
</dbReference>
<dbReference type="SMR" id="Q0D541"/>
<dbReference type="FunCoup" id="Q0D541">
    <property type="interactions" value="1080"/>
</dbReference>
<dbReference type="STRING" id="39947.Q0D541"/>
<dbReference type="PaxDb" id="39947-Q0D541"/>
<dbReference type="EnsemblPlants" id="Os07t0584100-01">
    <property type="protein sequence ID" value="Os07t0584100-01"/>
    <property type="gene ID" value="Os07g0584100"/>
</dbReference>
<dbReference type="Gramene" id="Os07t0584100-01">
    <property type="protein sequence ID" value="Os07t0584100-01"/>
    <property type="gene ID" value="Os07g0584100"/>
</dbReference>
<dbReference type="KEGG" id="dosa:Os07g0584100"/>
<dbReference type="eggNOG" id="KOG0584">
    <property type="taxonomic scope" value="Eukaryota"/>
</dbReference>
<dbReference type="HOGENOM" id="CLU_000288_63_23_1"/>
<dbReference type="InParanoid" id="Q0D541"/>
<dbReference type="OMA" id="YRKVTNV"/>
<dbReference type="OrthoDB" id="4062651at2759"/>
<dbReference type="Proteomes" id="UP000000763">
    <property type="component" value="Chromosome 7"/>
</dbReference>
<dbReference type="Proteomes" id="UP000007752">
    <property type="component" value="Chromosome 7"/>
</dbReference>
<dbReference type="Proteomes" id="UP000059680">
    <property type="component" value="Chromosome 7"/>
</dbReference>
<dbReference type="GO" id="GO:0005737">
    <property type="term" value="C:cytoplasm"/>
    <property type="evidence" value="ECO:0000318"/>
    <property type="project" value="GO_Central"/>
</dbReference>
<dbReference type="GO" id="GO:0005524">
    <property type="term" value="F:ATP binding"/>
    <property type="evidence" value="ECO:0007669"/>
    <property type="project" value="UniProtKB-KW"/>
</dbReference>
<dbReference type="GO" id="GO:0106310">
    <property type="term" value="F:protein serine kinase activity"/>
    <property type="evidence" value="ECO:0007669"/>
    <property type="project" value="RHEA"/>
</dbReference>
<dbReference type="GO" id="GO:0004674">
    <property type="term" value="F:protein serine/threonine kinase activity"/>
    <property type="evidence" value="ECO:0000318"/>
    <property type="project" value="GO_Central"/>
</dbReference>
<dbReference type="GO" id="GO:0035556">
    <property type="term" value="P:intracellular signal transduction"/>
    <property type="evidence" value="ECO:0000318"/>
    <property type="project" value="GO_Central"/>
</dbReference>
<dbReference type="FunFam" id="3.30.200.20:FF:000075">
    <property type="entry name" value="Probable serine/threonine-protein kinase WNK1"/>
    <property type="match status" value="1"/>
</dbReference>
<dbReference type="FunFam" id="1.10.510.10:FF:000046">
    <property type="entry name" value="probable serine/threonine-protein kinase WNK9"/>
    <property type="match status" value="1"/>
</dbReference>
<dbReference type="Gene3D" id="3.30.200.20">
    <property type="entry name" value="Phosphorylase Kinase, domain 1"/>
    <property type="match status" value="1"/>
</dbReference>
<dbReference type="Gene3D" id="1.10.510.10">
    <property type="entry name" value="Transferase(Phosphotransferase) domain 1"/>
    <property type="match status" value="1"/>
</dbReference>
<dbReference type="InterPro" id="IPR011009">
    <property type="entry name" value="Kinase-like_dom_sf"/>
</dbReference>
<dbReference type="InterPro" id="IPR000719">
    <property type="entry name" value="Prot_kinase_dom"/>
</dbReference>
<dbReference type="InterPro" id="IPR050588">
    <property type="entry name" value="WNK_Ser-Thr_kinase"/>
</dbReference>
<dbReference type="PANTHER" id="PTHR13902">
    <property type="entry name" value="SERINE/THREONINE-PROTEIN KINASE WNK WITH NO LYSINE -RELATED"/>
    <property type="match status" value="1"/>
</dbReference>
<dbReference type="Pfam" id="PF00069">
    <property type="entry name" value="Pkinase"/>
    <property type="match status" value="1"/>
</dbReference>
<dbReference type="SUPFAM" id="SSF56112">
    <property type="entry name" value="Protein kinase-like (PK-like)"/>
    <property type="match status" value="1"/>
</dbReference>
<dbReference type="PROSITE" id="PS50011">
    <property type="entry name" value="PROTEIN_KINASE_DOM"/>
    <property type="match status" value="1"/>
</dbReference>
<protein>
    <recommendedName>
        <fullName>Probable serine/threonine-protein kinase WNK5</fullName>
        <shortName>OsWNK5</shortName>
        <ecNumber>2.7.11.1</ecNumber>
    </recommendedName>
    <alternativeName>
        <fullName>Protein kinase with no lysine 5</fullName>
    </alternativeName>
</protein>
<gene>
    <name type="primary">WNK5</name>
    <name type="ordered locus">Os07g0584100</name>
    <name type="ordered locus">LOC_Os07g39520</name>
    <name type="ORF">OJ1127_E01.120</name>
    <name type="ORF">OsJ_023934</name>
</gene>
<evidence type="ECO:0000250" key="1">
    <source>
        <dbReference type="UniProtKB" id="Q9H4A3"/>
    </source>
</evidence>
<evidence type="ECO:0000250" key="2">
    <source>
        <dbReference type="UniProtKB" id="Q9JIH7"/>
    </source>
</evidence>
<evidence type="ECO:0000255" key="3">
    <source>
        <dbReference type="PROSITE-ProRule" id="PRU00159"/>
    </source>
</evidence>
<evidence type="ECO:0000256" key="4">
    <source>
        <dbReference type="SAM" id="MobiDB-lite"/>
    </source>
</evidence>
<evidence type="ECO:0000305" key="5"/>
<reference key="1">
    <citation type="journal article" date="2005" name="Nature">
        <title>The map-based sequence of the rice genome.</title>
        <authorList>
            <consortium name="International rice genome sequencing project (IRGSP)"/>
        </authorList>
    </citation>
    <scope>NUCLEOTIDE SEQUENCE [LARGE SCALE GENOMIC DNA]</scope>
    <source>
        <strain>cv. Nipponbare</strain>
    </source>
</reference>
<reference key="2">
    <citation type="journal article" date="2008" name="Nucleic Acids Res.">
        <title>The rice annotation project database (RAP-DB): 2008 update.</title>
        <authorList>
            <consortium name="The rice annotation project (RAP)"/>
        </authorList>
    </citation>
    <scope>GENOME REANNOTATION</scope>
    <source>
        <strain>cv. Nipponbare</strain>
    </source>
</reference>
<reference key="3">
    <citation type="journal article" date="2013" name="Rice">
        <title>Improvement of the Oryza sativa Nipponbare reference genome using next generation sequence and optical map data.</title>
        <authorList>
            <person name="Kawahara Y."/>
            <person name="de la Bastide M."/>
            <person name="Hamilton J.P."/>
            <person name="Kanamori H."/>
            <person name="McCombie W.R."/>
            <person name="Ouyang S."/>
            <person name="Schwartz D.C."/>
            <person name="Tanaka T."/>
            <person name="Wu J."/>
            <person name="Zhou S."/>
            <person name="Childs K.L."/>
            <person name="Davidson R.M."/>
            <person name="Lin H."/>
            <person name="Quesada-Ocampo L."/>
            <person name="Vaillancourt B."/>
            <person name="Sakai H."/>
            <person name="Lee S.S."/>
            <person name="Kim J."/>
            <person name="Numa H."/>
            <person name="Itoh T."/>
            <person name="Buell C.R."/>
            <person name="Matsumoto T."/>
        </authorList>
    </citation>
    <scope>GENOME REANNOTATION</scope>
    <source>
        <strain>cv. Nipponbare</strain>
    </source>
</reference>
<reference key="4">
    <citation type="journal article" date="2005" name="PLoS Biol.">
        <title>The genomes of Oryza sativa: a history of duplications.</title>
        <authorList>
            <person name="Yu J."/>
            <person name="Wang J."/>
            <person name="Lin W."/>
            <person name="Li S."/>
            <person name="Li H."/>
            <person name="Zhou J."/>
            <person name="Ni P."/>
            <person name="Dong W."/>
            <person name="Hu S."/>
            <person name="Zeng C."/>
            <person name="Zhang J."/>
            <person name="Zhang Y."/>
            <person name="Li R."/>
            <person name="Xu Z."/>
            <person name="Li S."/>
            <person name="Li X."/>
            <person name="Zheng H."/>
            <person name="Cong L."/>
            <person name="Lin L."/>
            <person name="Yin J."/>
            <person name="Geng J."/>
            <person name="Li G."/>
            <person name="Shi J."/>
            <person name="Liu J."/>
            <person name="Lv H."/>
            <person name="Li J."/>
            <person name="Wang J."/>
            <person name="Deng Y."/>
            <person name="Ran L."/>
            <person name="Shi X."/>
            <person name="Wang X."/>
            <person name="Wu Q."/>
            <person name="Li C."/>
            <person name="Ren X."/>
            <person name="Wang J."/>
            <person name="Wang X."/>
            <person name="Li D."/>
            <person name="Liu D."/>
            <person name="Zhang X."/>
            <person name="Ji Z."/>
            <person name="Zhao W."/>
            <person name="Sun Y."/>
            <person name="Zhang Z."/>
            <person name="Bao J."/>
            <person name="Han Y."/>
            <person name="Dong L."/>
            <person name="Ji J."/>
            <person name="Chen P."/>
            <person name="Wu S."/>
            <person name="Liu J."/>
            <person name="Xiao Y."/>
            <person name="Bu D."/>
            <person name="Tan J."/>
            <person name="Yang L."/>
            <person name="Ye C."/>
            <person name="Zhang J."/>
            <person name="Xu J."/>
            <person name="Zhou Y."/>
            <person name="Yu Y."/>
            <person name="Zhang B."/>
            <person name="Zhuang S."/>
            <person name="Wei H."/>
            <person name="Liu B."/>
            <person name="Lei M."/>
            <person name="Yu H."/>
            <person name="Li Y."/>
            <person name="Xu H."/>
            <person name="Wei S."/>
            <person name="He X."/>
            <person name="Fang L."/>
            <person name="Zhang Z."/>
            <person name="Zhang Y."/>
            <person name="Huang X."/>
            <person name="Su Z."/>
            <person name="Tong W."/>
            <person name="Li J."/>
            <person name="Tong Z."/>
            <person name="Li S."/>
            <person name="Ye J."/>
            <person name="Wang L."/>
            <person name="Fang L."/>
            <person name="Lei T."/>
            <person name="Chen C.-S."/>
            <person name="Chen H.-C."/>
            <person name="Xu Z."/>
            <person name="Li H."/>
            <person name="Huang H."/>
            <person name="Zhang F."/>
            <person name="Xu H."/>
            <person name="Li N."/>
            <person name="Zhao C."/>
            <person name="Li S."/>
            <person name="Dong L."/>
            <person name="Huang Y."/>
            <person name="Li L."/>
            <person name="Xi Y."/>
            <person name="Qi Q."/>
            <person name="Li W."/>
            <person name="Zhang B."/>
            <person name="Hu W."/>
            <person name="Zhang Y."/>
            <person name="Tian X."/>
            <person name="Jiao Y."/>
            <person name="Liang X."/>
            <person name="Jin J."/>
            <person name="Gao L."/>
            <person name="Zheng W."/>
            <person name="Hao B."/>
            <person name="Liu S.-M."/>
            <person name="Wang W."/>
            <person name="Yuan L."/>
            <person name="Cao M."/>
            <person name="McDermott J."/>
            <person name="Samudrala R."/>
            <person name="Wang J."/>
            <person name="Wong G.K.-S."/>
            <person name="Yang H."/>
        </authorList>
    </citation>
    <scope>NUCLEOTIDE SEQUENCE [LARGE SCALE GENOMIC DNA]</scope>
    <source>
        <strain>cv. Nipponbare</strain>
    </source>
</reference>
<reference key="5">
    <citation type="journal article" date="2003" name="Science">
        <title>Collection, mapping, and annotation of over 28,000 cDNA clones from japonica rice.</title>
        <authorList>
            <consortium name="The rice full-length cDNA consortium"/>
        </authorList>
    </citation>
    <scope>NUCLEOTIDE SEQUENCE [LARGE SCALE MRNA]</scope>
    <source>
        <strain>cv. Nipponbare</strain>
    </source>
</reference>
<accession>Q0D541</accession>
<accession>B7EK88</accession>
<accession>Q7F262</accession>
<name>WNK5_ORYSJ</name>
<keyword id="KW-0067">ATP-binding</keyword>
<keyword id="KW-0418">Kinase</keyword>
<keyword id="KW-0547">Nucleotide-binding</keyword>
<keyword id="KW-1185">Reference proteome</keyword>
<keyword id="KW-0723">Serine/threonine-protein kinase</keyword>
<keyword id="KW-0808">Transferase</keyword>
<organism>
    <name type="scientific">Oryza sativa subsp. japonica</name>
    <name type="common">Rice</name>
    <dbReference type="NCBI Taxonomy" id="39947"/>
    <lineage>
        <taxon>Eukaryota</taxon>
        <taxon>Viridiplantae</taxon>
        <taxon>Streptophyta</taxon>
        <taxon>Embryophyta</taxon>
        <taxon>Tracheophyta</taxon>
        <taxon>Spermatophyta</taxon>
        <taxon>Magnoliopsida</taxon>
        <taxon>Liliopsida</taxon>
        <taxon>Poales</taxon>
        <taxon>Poaceae</taxon>
        <taxon>BOP clade</taxon>
        <taxon>Oryzoideae</taxon>
        <taxon>Oryzeae</taxon>
        <taxon>Oryzinae</taxon>
        <taxon>Oryza</taxon>
        <taxon>Oryza sativa</taxon>
    </lineage>
</organism>
<comment type="catalytic activity">
    <reaction>
        <text>L-seryl-[protein] + ATP = O-phospho-L-seryl-[protein] + ADP + H(+)</text>
        <dbReference type="Rhea" id="RHEA:17989"/>
        <dbReference type="Rhea" id="RHEA-COMP:9863"/>
        <dbReference type="Rhea" id="RHEA-COMP:11604"/>
        <dbReference type="ChEBI" id="CHEBI:15378"/>
        <dbReference type="ChEBI" id="CHEBI:29999"/>
        <dbReference type="ChEBI" id="CHEBI:30616"/>
        <dbReference type="ChEBI" id="CHEBI:83421"/>
        <dbReference type="ChEBI" id="CHEBI:456216"/>
        <dbReference type="EC" id="2.7.11.1"/>
    </reaction>
</comment>
<comment type="catalytic activity">
    <reaction>
        <text>L-threonyl-[protein] + ATP = O-phospho-L-threonyl-[protein] + ADP + H(+)</text>
        <dbReference type="Rhea" id="RHEA:46608"/>
        <dbReference type="Rhea" id="RHEA-COMP:11060"/>
        <dbReference type="Rhea" id="RHEA-COMP:11605"/>
        <dbReference type="ChEBI" id="CHEBI:15378"/>
        <dbReference type="ChEBI" id="CHEBI:30013"/>
        <dbReference type="ChEBI" id="CHEBI:30616"/>
        <dbReference type="ChEBI" id="CHEBI:61977"/>
        <dbReference type="ChEBI" id="CHEBI:456216"/>
        <dbReference type="EC" id="2.7.11.1"/>
    </reaction>
</comment>
<comment type="similarity">
    <text evidence="3">Belongs to the protein kinase superfamily. Ser/Thr protein kinase family. WNK subfamily.</text>
</comment>
<comment type="caution">
    <text evidence="1">Was named WNK/'with no lysine(K)' because key residues for catalysis, including the lysine involved in ATP binding, are either not conserved or differ compared to the residues described in other kinase family proteins.</text>
</comment>
<comment type="sequence caution" evidence="5">
    <conflict type="erroneous initiation">
        <sequence resource="EMBL-CDS" id="BAC82962"/>
    </conflict>
</comment>
<comment type="sequence caution" evidence="5">
    <conflict type="erroneous initiation">
        <sequence resource="EMBL-CDS" id="EAZ40451"/>
    </conflict>
</comment>
<sequence>MPPNPTPPRRATTTTTRATSGVRRGEEEQGGMAVSASAGEEEEAFEEVDPTGRFGRYADVLGLGSVKKVYRGFDQEEGIEVAWNRVRLRALADRDPAMVERLHAEVRLLRSLHHEHIIGFHKVWLDRDAGVLNFITEVCTSGSLREYRDRHRHVSVKALKKWARQILLGLDHLHTHDPCIIHRDLNCSNVFINGNTGQVKIGDLGLAAIVDKTHVAHTILGTPEFMAPELYTETYTESVDIYSYGMCVLEMVTREMPYAECDSVVQIYHSVTRGVPPAALKRIRDPELRAFIERCIGQPRNRPSAAELLRDPFFAGIDDDDSTGTLG</sequence>
<feature type="chain" id="PRO_0000351675" description="Probable serine/threonine-protein kinase WNK5">
    <location>
        <begin position="1"/>
        <end position="327"/>
    </location>
</feature>
<feature type="domain" description="Protein kinase" evidence="3">
    <location>
        <begin position="55"/>
        <end position="314"/>
    </location>
</feature>
<feature type="region of interest" description="Disordered" evidence="4">
    <location>
        <begin position="1"/>
        <end position="48"/>
    </location>
</feature>
<feature type="compositionally biased region" description="Low complexity" evidence="4">
    <location>
        <begin position="9"/>
        <end position="19"/>
    </location>
</feature>
<feature type="compositionally biased region" description="Acidic residues" evidence="4">
    <location>
        <begin position="39"/>
        <end position="48"/>
    </location>
</feature>
<feature type="active site" description="Proton acceptor" evidence="2">
    <location>
        <position position="203"/>
    </location>
</feature>
<feature type="binding site" evidence="1">
    <location>
        <begin position="136"/>
        <end position="139"/>
    </location>
    <ligand>
        <name>ATP</name>
        <dbReference type="ChEBI" id="CHEBI:30616"/>
    </ligand>
</feature>
<proteinExistence type="evidence at transcript level"/>